<dbReference type="EC" id="5.3.1.1" evidence="1"/>
<dbReference type="EMBL" id="CP000034">
    <property type="protein sequence ID" value="ABB63771.1"/>
    <property type="molecule type" value="Genomic_DNA"/>
</dbReference>
<dbReference type="RefSeq" id="WP_001216325.1">
    <property type="nucleotide sequence ID" value="NC_007606.1"/>
</dbReference>
<dbReference type="RefSeq" id="YP_405262.1">
    <property type="nucleotide sequence ID" value="NC_007606.1"/>
</dbReference>
<dbReference type="SMR" id="Q32A84"/>
<dbReference type="STRING" id="300267.SDY_3826"/>
<dbReference type="EnsemblBacteria" id="ABB63771">
    <property type="protein sequence ID" value="ABB63771"/>
    <property type="gene ID" value="SDY_3826"/>
</dbReference>
<dbReference type="GeneID" id="93777979"/>
<dbReference type="KEGG" id="sdy:SDY_3826"/>
<dbReference type="PATRIC" id="fig|300267.13.peg.4518"/>
<dbReference type="HOGENOM" id="CLU_024251_2_1_6"/>
<dbReference type="UniPathway" id="UPA00109">
    <property type="reaction ID" value="UER00189"/>
</dbReference>
<dbReference type="UniPathway" id="UPA00138"/>
<dbReference type="Proteomes" id="UP000002716">
    <property type="component" value="Chromosome"/>
</dbReference>
<dbReference type="GO" id="GO:0005829">
    <property type="term" value="C:cytosol"/>
    <property type="evidence" value="ECO:0007669"/>
    <property type="project" value="TreeGrafter"/>
</dbReference>
<dbReference type="GO" id="GO:0004807">
    <property type="term" value="F:triose-phosphate isomerase activity"/>
    <property type="evidence" value="ECO:0007669"/>
    <property type="project" value="UniProtKB-UniRule"/>
</dbReference>
<dbReference type="GO" id="GO:0006094">
    <property type="term" value="P:gluconeogenesis"/>
    <property type="evidence" value="ECO:0007669"/>
    <property type="project" value="UniProtKB-UniRule"/>
</dbReference>
<dbReference type="GO" id="GO:0046166">
    <property type="term" value="P:glyceraldehyde-3-phosphate biosynthetic process"/>
    <property type="evidence" value="ECO:0007669"/>
    <property type="project" value="TreeGrafter"/>
</dbReference>
<dbReference type="GO" id="GO:0019563">
    <property type="term" value="P:glycerol catabolic process"/>
    <property type="evidence" value="ECO:0007669"/>
    <property type="project" value="TreeGrafter"/>
</dbReference>
<dbReference type="GO" id="GO:0006096">
    <property type="term" value="P:glycolytic process"/>
    <property type="evidence" value="ECO:0007669"/>
    <property type="project" value="UniProtKB-UniRule"/>
</dbReference>
<dbReference type="CDD" id="cd00311">
    <property type="entry name" value="TIM"/>
    <property type="match status" value="1"/>
</dbReference>
<dbReference type="FunFam" id="3.20.20.70:FF:000020">
    <property type="entry name" value="Triosephosphate isomerase"/>
    <property type="match status" value="1"/>
</dbReference>
<dbReference type="Gene3D" id="3.20.20.70">
    <property type="entry name" value="Aldolase class I"/>
    <property type="match status" value="1"/>
</dbReference>
<dbReference type="HAMAP" id="MF_00147_B">
    <property type="entry name" value="TIM_B"/>
    <property type="match status" value="1"/>
</dbReference>
<dbReference type="InterPro" id="IPR013785">
    <property type="entry name" value="Aldolase_TIM"/>
</dbReference>
<dbReference type="InterPro" id="IPR035990">
    <property type="entry name" value="TIM_sf"/>
</dbReference>
<dbReference type="InterPro" id="IPR022896">
    <property type="entry name" value="TrioseP_Isoase_bac/euk"/>
</dbReference>
<dbReference type="InterPro" id="IPR000652">
    <property type="entry name" value="Triosephosphate_isomerase"/>
</dbReference>
<dbReference type="InterPro" id="IPR020861">
    <property type="entry name" value="Triosephosphate_isomerase_AS"/>
</dbReference>
<dbReference type="NCBIfam" id="TIGR00419">
    <property type="entry name" value="tim"/>
    <property type="match status" value="1"/>
</dbReference>
<dbReference type="PANTHER" id="PTHR21139">
    <property type="entry name" value="TRIOSEPHOSPHATE ISOMERASE"/>
    <property type="match status" value="1"/>
</dbReference>
<dbReference type="PANTHER" id="PTHR21139:SF42">
    <property type="entry name" value="TRIOSEPHOSPHATE ISOMERASE"/>
    <property type="match status" value="1"/>
</dbReference>
<dbReference type="Pfam" id="PF00121">
    <property type="entry name" value="TIM"/>
    <property type="match status" value="1"/>
</dbReference>
<dbReference type="SUPFAM" id="SSF51351">
    <property type="entry name" value="Triosephosphate isomerase (TIM)"/>
    <property type="match status" value="1"/>
</dbReference>
<dbReference type="PROSITE" id="PS00171">
    <property type="entry name" value="TIM_1"/>
    <property type="match status" value="1"/>
</dbReference>
<dbReference type="PROSITE" id="PS51440">
    <property type="entry name" value="TIM_2"/>
    <property type="match status" value="1"/>
</dbReference>
<protein>
    <recommendedName>
        <fullName evidence="1">Triosephosphate isomerase</fullName>
        <shortName evidence="1">TIM</shortName>
        <shortName evidence="1">TPI</shortName>
        <ecNumber evidence="1">5.3.1.1</ecNumber>
    </recommendedName>
    <alternativeName>
        <fullName evidence="1">Triose-phosphate isomerase</fullName>
    </alternativeName>
</protein>
<name>TPIS_SHIDS</name>
<feature type="chain" id="PRO_0000307561" description="Triosephosphate isomerase">
    <location>
        <begin position="1"/>
        <end position="255"/>
    </location>
</feature>
<feature type="active site" description="Electrophile" evidence="1">
    <location>
        <position position="95"/>
    </location>
</feature>
<feature type="active site" description="Proton acceptor" evidence="1">
    <location>
        <position position="167"/>
    </location>
</feature>
<feature type="binding site" evidence="1">
    <location>
        <begin position="9"/>
        <end position="11"/>
    </location>
    <ligand>
        <name>substrate</name>
    </ligand>
</feature>
<feature type="binding site" evidence="1">
    <location>
        <position position="173"/>
    </location>
    <ligand>
        <name>substrate</name>
    </ligand>
</feature>
<feature type="binding site" evidence="1">
    <location>
        <position position="212"/>
    </location>
    <ligand>
        <name>substrate</name>
    </ligand>
</feature>
<feature type="binding site" evidence="1">
    <location>
        <begin position="233"/>
        <end position="234"/>
    </location>
    <ligand>
        <name>substrate</name>
    </ligand>
</feature>
<gene>
    <name evidence="1" type="primary">tpiA</name>
    <name type="ordered locus">SDY_3826</name>
</gene>
<comment type="function">
    <text evidence="1">Involved in the gluconeogenesis. Catalyzes stereospecifically the conversion of dihydroxyacetone phosphate (DHAP) to D-glyceraldehyde-3-phosphate (G3P).</text>
</comment>
<comment type="catalytic activity">
    <reaction evidence="1">
        <text>D-glyceraldehyde 3-phosphate = dihydroxyacetone phosphate</text>
        <dbReference type="Rhea" id="RHEA:18585"/>
        <dbReference type="ChEBI" id="CHEBI:57642"/>
        <dbReference type="ChEBI" id="CHEBI:59776"/>
        <dbReference type="EC" id="5.3.1.1"/>
    </reaction>
</comment>
<comment type="pathway">
    <text evidence="1">Carbohydrate biosynthesis; gluconeogenesis.</text>
</comment>
<comment type="pathway">
    <text evidence="1">Carbohydrate degradation; glycolysis; D-glyceraldehyde 3-phosphate from glycerone phosphate: step 1/1.</text>
</comment>
<comment type="subunit">
    <text evidence="1">Homodimer.</text>
</comment>
<comment type="subcellular location">
    <subcellularLocation>
        <location evidence="1">Cytoplasm</location>
    </subcellularLocation>
</comment>
<comment type="similarity">
    <text evidence="1">Belongs to the triosephosphate isomerase family.</text>
</comment>
<reference key="1">
    <citation type="journal article" date="2005" name="Nucleic Acids Res.">
        <title>Genome dynamics and diversity of Shigella species, the etiologic agents of bacillary dysentery.</title>
        <authorList>
            <person name="Yang F."/>
            <person name="Yang J."/>
            <person name="Zhang X."/>
            <person name="Chen L."/>
            <person name="Jiang Y."/>
            <person name="Yan Y."/>
            <person name="Tang X."/>
            <person name="Wang J."/>
            <person name="Xiong Z."/>
            <person name="Dong J."/>
            <person name="Xue Y."/>
            <person name="Zhu Y."/>
            <person name="Xu X."/>
            <person name="Sun L."/>
            <person name="Chen S."/>
            <person name="Nie H."/>
            <person name="Peng J."/>
            <person name="Xu J."/>
            <person name="Wang Y."/>
            <person name="Yuan Z."/>
            <person name="Wen Y."/>
            <person name="Yao Z."/>
            <person name="Shen Y."/>
            <person name="Qiang B."/>
            <person name="Hou Y."/>
            <person name="Yu J."/>
            <person name="Jin Q."/>
        </authorList>
    </citation>
    <scope>NUCLEOTIDE SEQUENCE [LARGE SCALE GENOMIC DNA]</scope>
    <source>
        <strain>Sd197</strain>
    </source>
</reference>
<sequence length="255" mass="26972">MRHPLVMGNWKLNGSRHMVHELVSNLRKELAGVAGCAVAIAPPEMYIDMAKREAEGSHIMLGAQNVDLNLSGAFTGETSAAMLKDIGAQYIIIGHSERRTYHKESDELIAKKFAVLKEQGLTPVLCIGETEAENEAGKTEEVCARQIDAVLKTQGAAAFEGAVIAYEPVWAIGTGKSATPAQAQAVHKFIRDHIAKVDANIAEQVIIQYGGSVNASNAAELFAQPDIDGALVGGASLKADAFAVIVKAAEAAKQA</sequence>
<accession>Q32A84</accession>
<evidence type="ECO:0000255" key="1">
    <source>
        <dbReference type="HAMAP-Rule" id="MF_00147"/>
    </source>
</evidence>
<keyword id="KW-0963">Cytoplasm</keyword>
<keyword id="KW-0312">Gluconeogenesis</keyword>
<keyword id="KW-0324">Glycolysis</keyword>
<keyword id="KW-0413">Isomerase</keyword>
<keyword id="KW-1185">Reference proteome</keyword>
<organism>
    <name type="scientific">Shigella dysenteriae serotype 1 (strain Sd197)</name>
    <dbReference type="NCBI Taxonomy" id="300267"/>
    <lineage>
        <taxon>Bacteria</taxon>
        <taxon>Pseudomonadati</taxon>
        <taxon>Pseudomonadota</taxon>
        <taxon>Gammaproteobacteria</taxon>
        <taxon>Enterobacterales</taxon>
        <taxon>Enterobacteriaceae</taxon>
        <taxon>Shigella</taxon>
    </lineage>
</organism>
<proteinExistence type="inferred from homology"/>